<evidence type="ECO:0000255" key="1">
    <source>
        <dbReference type="HAMAP-Rule" id="MF_04069"/>
    </source>
</evidence>
<evidence type="ECO:0000256" key="2">
    <source>
        <dbReference type="SAM" id="MobiDB-lite"/>
    </source>
</evidence>
<dbReference type="EMBL" id="M63531">
    <property type="protein sequence ID" value="AAA43301.1"/>
    <property type="molecule type" value="Genomic_RNA"/>
</dbReference>
<dbReference type="RefSeq" id="YP_308853.1">
    <molecule id="Q67179-1"/>
    <property type="nucleotide sequence ID" value="NC_007377.1"/>
</dbReference>
<dbReference type="SMR" id="Q67179"/>
<dbReference type="IntAct" id="Q67179">
    <property type="interactions" value="1"/>
</dbReference>
<dbReference type="GlyCosmos" id="Q67179">
    <property type="glycosylation" value="1 site, No reported glycans"/>
</dbReference>
<dbReference type="KEGG" id="vg:3655107"/>
<dbReference type="OrthoDB" id="20646at10239"/>
<dbReference type="Proteomes" id="UP000200640">
    <property type="component" value="Genome"/>
</dbReference>
<dbReference type="GO" id="GO:0020002">
    <property type="term" value="C:host cell plasma membrane"/>
    <property type="evidence" value="ECO:0007669"/>
    <property type="project" value="UniProtKB-SubCell"/>
</dbReference>
<dbReference type="GO" id="GO:0016020">
    <property type="term" value="C:membrane"/>
    <property type="evidence" value="ECO:0007669"/>
    <property type="project" value="UniProtKB-UniRule"/>
</dbReference>
<dbReference type="GO" id="GO:0055036">
    <property type="term" value="C:virion membrane"/>
    <property type="evidence" value="ECO:0007669"/>
    <property type="project" value="UniProtKB-SubCell"/>
</dbReference>
<dbReference type="GO" id="GO:0005216">
    <property type="term" value="F:monoatomic ion channel activity"/>
    <property type="evidence" value="ECO:0007669"/>
    <property type="project" value="UniProtKB-UniRule"/>
</dbReference>
<dbReference type="GO" id="GO:0015078">
    <property type="term" value="F:proton transmembrane transporter activity"/>
    <property type="evidence" value="ECO:0007669"/>
    <property type="project" value="UniProtKB-UniRule"/>
</dbReference>
<dbReference type="GO" id="GO:0051259">
    <property type="term" value="P:protein complex oligomerization"/>
    <property type="evidence" value="ECO:0007669"/>
    <property type="project" value="UniProtKB-UniRule"/>
</dbReference>
<dbReference type="GO" id="GO:0044694">
    <property type="term" value="P:symbiont genome entry into host cell via pore formation in plasma membrane"/>
    <property type="evidence" value="ECO:0007669"/>
    <property type="project" value="UniProtKB-UniRule"/>
</dbReference>
<dbReference type="GO" id="GO:0140321">
    <property type="term" value="P:symbiont-mediated suppression of host autophagy"/>
    <property type="evidence" value="ECO:0007669"/>
    <property type="project" value="UniProtKB-KW"/>
</dbReference>
<dbReference type="Gene3D" id="6.10.250.1640">
    <property type="match status" value="1"/>
</dbReference>
<dbReference type="HAMAP" id="MF_04069">
    <property type="entry name" value="INFV_M2"/>
    <property type="match status" value="1"/>
</dbReference>
<dbReference type="InterPro" id="IPR002089">
    <property type="entry name" value="Flu_M2"/>
</dbReference>
<dbReference type="Pfam" id="PF00599">
    <property type="entry name" value="Flu_M2"/>
    <property type="match status" value="1"/>
</dbReference>
<protein>
    <recommendedName>
        <fullName evidence="1">Matrix protein 2</fullName>
    </recommendedName>
    <alternativeName>
        <fullName evidence="1">Proton channel protein M2</fullName>
    </alternativeName>
</protein>
<organism>
    <name type="scientific">Influenza A virus (strain A/Korea/426/1968 H2N2)</name>
    <dbReference type="NCBI Taxonomy" id="488241"/>
    <lineage>
        <taxon>Viruses</taxon>
        <taxon>Riboviria</taxon>
        <taxon>Orthornavirae</taxon>
        <taxon>Negarnaviricota</taxon>
        <taxon>Polyploviricotina</taxon>
        <taxon>Insthoviricetes</taxon>
        <taxon>Articulavirales</taxon>
        <taxon>Orthomyxoviridae</taxon>
        <taxon>Alphainfluenzavirus</taxon>
        <taxon>Alphainfluenzavirus influenzae</taxon>
        <taxon>Influenza A virus</taxon>
    </lineage>
</organism>
<sequence length="97" mass="11219">MSLLTEVETPIRNEWGCRCNDSSDPLVVAASIIGILHFILWILDRLFFKCIYRFFKHGLKRGPSTEGVPESMREEYRKEQQSAVDADDSHFVSIELE</sequence>
<feature type="chain" id="PRO_0000326347" description="Matrix protein 2">
    <location>
        <begin position="1"/>
        <end position="97"/>
    </location>
</feature>
<feature type="topological domain" description="Virion surface" evidence="1">
    <location>
        <begin position="1"/>
        <end position="22"/>
    </location>
</feature>
<feature type="transmembrane region" description="Helical; Signal-anchor for type III membrane protein" evidence="1">
    <location>
        <begin position="23"/>
        <end position="43"/>
    </location>
</feature>
<feature type="topological domain" description="Intravirion" evidence="1">
    <location>
        <begin position="44"/>
        <end position="97"/>
    </location>
</feature>
<feature type="region of interest" description="Disordered" evidence="2">
    <location>
        <begin position="59"/>
        <end position="88"/>
    </location>
</feature>
<feature type="compositionally biased region" description="Basic and acidic residues" evidence="2">
    <location>
        <begin position="71"/>
        <end position="80"/>
    </location>
</feature>
<feature type="site" description="Essential for channel activity, possibly by being protonated during channel activation, and by forming the channel gate and the selective filter" evidence="1">
    <location>
        <position position="37"/>
    </location>
</feature>
<feature type="site" description="Seems to be involved in pH gating" evidence="1">
    <location>
        <position position="41"/>
    </location>
</feature>
<feature type="modified residue" description="Phosphoserine; by host" evidence="1">
    <location>
        <position position="64"/>
    </location>
</feature>
<feature type="modified residue" description="Phosphoserine; by host" evidence="1">
    <location>
        <position position="82"/>
    </location>
</feature>
<feature type="modified residue" description="Phosphoserine; by host" evidence="1">
    <location>
        <position position="93"/>
    </location>
</feature>
<feature type="lipid moiety-binding region" description="S-palmitoyl cysteine; by host" evidence="1">
    <location>
        <position position="50"/>
    </location>
</feature>
<feature type="glycosylation site" description="N-linked (GlcNAc...) asparagine; by host" evidence="1">
    <location>
        <position position="20"/>
    </location>
</feature>
<feature type="disulfide bond" description="Interchain (with C-17)" evidence="1">
    <location>
        <position position="17"/>
    </location>
</feature>
<feature type="disulfide bond" description="Interchain (with C-19)" evidence="1">
    <location>
        <position position="19"/>
    </location>
</feature>
<reference key="1">
    <citation type="journal article" date="1991" name="J. Virol.">
        <title>Evolutionary analysis of the influenza A virus M gene with comparison of the M1 and M2 proteins.</title>
        <authorList>
            <person name="Ito T."/>
            <person name="Gorman O.T."/>
            <person name="Kawaoka Y."/>
            <person name="Bean W.J."/>
            <person name="Webster R.G."/>
        </authorList>
    </citation>
    <scope>NUCLEOTIDE SEQUENCE [GENOMIC RNA]</scope>
</reference>
<comment type="function">
    <text evidence="1">Forms a proton-selective ion channel that is necessary for the efficient release of the viral genome during virus entry. After attaching to the cell surface, the virion enters the cell by endocytosis. Acidification of the endosome triggers M2 ion channel activity. The influx of protons into virion interior is believed to disrupt interactions between the viral ribonucleoprotein (RNP), matrix protein 1 (M1), and lipid bilayers, thereby freeing the viral genome from interaction with viral proteins and enabling RNA segments to migrate to the host cell nucleus, where influenza virus RNA transcription and replication occur. Also plays a role in viral proteins secretory pathway. Elevates the intravesicular pH of normally acidic compartments, such as trans-Golgi network, preventing newly formed hemagglutinin from premature switching to the fusion-active conformation.</text>
</comment>
<comment type="activity regulation">
    <text>The M2 protein from most influenza A strains is inhibited by amantadine and rimantadine, resulting in viral uncoating incapacity. Emergence of amantadine-resistant variants is usually rapid.</text>
</comment>
<comment type="subunit">
    <text evidence="1">Homotetramer; composed of two disulfide-linked dimers held together by non-covalent interactions. May interact with matrix protein 1.</text>
</comment>
<comment type="subcellular location">
    <subcellularLocation>
        <location evidence="1">Virion membrane</location>
    </subcellularLocation>
    <subcellularLocation>
        <location evidence="1">Host apical cell membrane</location>
        <topology evidence="1">Single-pass type III membrane protein</topology>
    </subcellularLocation>
    <text evidence="1">Abundantly expressed at the apical plasma membrane in infected polarized epithelial cells, in close proximity to budding and assembled virions. Minor component of virions (only 16-20 molecules/virion).</text>
</comment>
<comment type="alternative products">
    <event type="alternative splicing"/>
    <isoform>
        <id>Q67179-1</id>
        <name>M2</name>
        <sequence type="displayed"/>
    </isoform>
    <isoform>
        <id>Q67180-1</id>
        <name>M1</name>
        <sequence type="external"/>
    </isoform>
    <text>Only the first 9 residues are shared by the 2 isoforms.</text>
</comment>
<comment type="domain">
    <text evidence="1">Cytoplasmic tail plays an important role in virion assembly and morphogenesis.</text>
</comment>
<comment type="miscellaneous">
    <text evidence="1">When the channel is activated, one or more imidazole moieties of His-37 probably become bi-protonated.</text>
</comment>
<comment type="similarity">
    <text evidence="1">Belongs to the influenza viruses matrix protein M2 family.</text>
</comment>
<accession>Q67179</accession>
<keyword id="KW-0025">Alternative splicing</keyword>
<keyword id="KW-1015">Disulfide bond</keyword>
<keyword id="KW-0325">Glycoprotein</keyword>
<keyword id="KW-1032">Host cell membrane</keyword>
<keyword id="KW-1043">Host membrane</keyword>
<keyword id="KW-0945">Host-virus interaction</keyword>
<keyword id="KW-0375">Hydrogen ion transport</keyword>
<keyword id="KW-1083">Inhibition of host autophagy by virus</keyword>
<keyword id="KW-0407">Ion channel</keyword>
<keyword id="KW-0406">Ion transport</keyword>
<keyword id="KW-0449">Lipoprotein</keyword>
<keyword id="KW-0472">Membrane</keyword>
<keyword id="KW-0564">Palmitate</keyword>
<keyword id="KW-0597">Phosphoprotein</keyword>
<keyword id="KW-0735">Signal-anchor</keyword>
<keyword id="KW-0812">Transmembrane</keyword>
<keyword id="KW-1133">Transmembrane helix</keyword>
<keyword id="KW-0813">Transport</keyword>
<keyword id="KW-1182">Viral ion channel</keyword>
<keyword id="KW-0946">Virion</keyword>
<name>M2_I68A5</name>
<organismHost>
    <name type="scientific">Aves</name>
    <dbReference type="NCBI Taxonomy" id="8782"/>
</organismHost>
<organismHost>
    <name type="scientific">Homo sapiens</name>
    <name type="common">Human</name>
    <dbReference type="NCBI Taxonomy" id="9606"/>
</organismHost>
<gene>
    <name evidence="1" type="primary">M</name>
</gene>
<proteinExistence type="inferred from homology"/>